<feature type="chain" id="PRO_0000139558" description="Light-independent protochlorophyllide reductase iron-sulfur ATP-binding protein">
    <location>
        <begin position="1"/>
        <end position="291"/>
    </location>
</feature>
<feature type="binding site" evidence="1">
    <location>
        <begin position="10"/>
        <end position="15"/>
    </location>
    <ligand>
        <name>ATP</name>
        <dbReference type="ChEBI" id="CHEBI:30616"/>
    </ligand>
</feature>
<feature type="binding site" evidence="1">
    <location>
        <position position="14"/>
    </location>
    <ligand>
        <name>Mg(2+)</name>
        <dbReference type="ChEBI" id="CHEBI:18420"/>
    </ligand>
</feature>
<feature type="binding site" evidence="1">
    <location>
        <position position="39"/>
    </location>
    <ligand>
        <name>ATP</name>
        <dbReference type="ChEBI" id="CHEBI:30616"/>
    </ligand>
</feature>
<feature type="binding site" evidence="1">
    <location>
        <position position="95"/>
    </location>
    <ligand>
        <name>[4Fe-4S] cluster</name>
        <dbReference type="ChEBI" id="CHEBI:49883"/>
        <note>ligand shared between dimeric partners</note>
    </ligand>
</feature>
<feature type="binding site" evidence="1">
    <location>
        <position position="129"/>
    </location>
    <ligand>
        <name>[4Fe-4S] cluster</name>
        <dbReference type="ChEBI" id="CHEBI:49883"/>
        <note>ligand shared between dimeric partners</note>
    </ligand>
</feature>
<feature type="binding site" evidence="1">
    <location>
        <begin position="180"/>
        <end position="181"/>
    </location>
    <ligand>
        <name>ATP</name>
        <dbReference type="ChEBI" id="CHEBI:30616"/>
    </ligand>
</feature>
<evidence type="ECO:0000255" key="1">
    <source>
        <dbReference type="HAMAP-Rule" id="MF_00355"/>
    </source>
</evidence>
<comment type="function">
    <text evidence="1">Component of the dark-operative protochlorophyllide reductase (DPOR) that uses Mg-ATP and reduced ferredoxin to reduce ring D of protochlorophyllide (Pchlide) to form chlorophyllide a (Chlide). This reaction is light-independent. The L component serves as a unique electron donor to the NB-component of the complex, and binds Mg-ATP.</text>
</comment>
<comment type="catalytic activity">
    <reaction evidence="1">
        <text>chlorophyllide a + oxidized 2[4Fe-4S]-[ferredoxin] + 2 ADP + 2 phosphate = protochlorophyllide a + reduced 2[4Fe-4S]-[ferredoxin] + 2 ATP + 2 H2O</text>
        <dbReference type="Rhea" id="RHEA:28202"/>
        <dbReference type="Rhea" id="RHEA-COMP:10002"/>
        <dbReference type="Rhea" id="RHEA-COMP:10004"/>
        <dbReference type="ChEBI" id="CHEBI:15377"/>
        <dbReference type="ChEBI" id="CHEBI:30616"/>
        <dbReference type="ChEBI" id="CHEBI:33722"/>
        <dbReference type="ChEBI" id="CHEBI:33723"/>
        <dbReference type="ChEBI" id="CHEBI:43474"/>
        <dbReference type="ChEBI" id="CHEBI:83348"/>
        <dbReference type="ChEBI" id="CHEBI:83350"/>
        <dbReference type="ChEBI" id="CHEBI:456216"/>
        <dbReference type="EC" id="1.3.7.7"/>
    </reaction>
</comment>
<comment type="cofactor">
    <cofactor evidence="1">
        <name>[4Fe-4S] cluster</name>
        <dbReference type="ChEBI" id="CHEBI:49883"/>
    </cofactor>
    <text evidence="1">Binds 1 [4Fe-4S] cluster per dimer.</text>
</comment>
<comment type="pathway">
    <text evidence="1">Porphyrin-containing compound metabolism; chlorophyll biosynthesis (light-independent).</text>
</comment>
<comment type="subunit">
    <text evidence="1">Homodimer. Protochlorophyllide reductase is composed of three subunits; ChlL, ChlN and ChlB.</text>
</comment>
<comment type="subcellular location">
    <subcellularLocation>
        <location>Plastid</location>
        <location>Chloroplast</location>
    </subcellularLocation>
</comment>
<comment type="similarity">
    <text evidence="1">Belongs to the NifH/BchL/ChlL family.</text>
</comment>
<name>CHLL_LARDC</name>
<protein>
    <recommendedName>
        <fullName evidence="1">Light-independent protochlorophyllide reductase iron-sulfur ATP-binding protein</fullName>
        <shortName evidence="1">DPOR subunit L</shortName>
        <shortName evidence="1">LI-POR subunit L</shortName>
        <ecNumber evidence="1">1.3.7.7</ecNumber>
    </recommendedName>
</protein>
<reference key="1">
    <citation type="submission" date="2004-11" db="EMBL/GenBank/DDBJ databases">
        <title>Presence of chlB gene encoding LIPOR subunit in Larix decidua.</title>
        <authorList>
            <person name="Minarik G."/>
            <person name="Valkova D."/>
            <person name="Demko V."/>
        </authorList>
    </citation>
    <scope>NUCLEOTIDE SEQUENCE [GENOMIC DNA]</scope>
</reference>
<geneLocation type="chloroplast"/>
<dbReference type="EC" id="1.3.7.7" evidence="1"/>
<dbReference type="EMBL" id="AY603408">
    <property type="protein sequence ID" value="AAT52200.2"/>
    <property type="molecule type" value="Genomic_DNA"/>
</dbReference>
<dbReference type="RefSeq" id="YP_004891228.1">
    <property type="nucleotide sequence ID" value="NC_016058.1"/>
</dbReference>
<dbReference type="SMR" id="Q695L6"/>
<dbReference type="GeneID" id="11258307"/>
<dbReference type="UniPathway" id="UPA00670"/>
<dbReference type="GO" id="GO:0009507">
    <property type="term" value="C:chloroplast"/>
    <property type="evidence" value="ECO:0007669"/>
    <property type="project" value="UniProtKB-SubCell"/>
</dbReference>
<dbReference type="GO" id="GO:0051539">
    <property type="term" value="F:4 iron, 4 sulfur cluster binding"/>
    <property type="evidence" value="ECO:0007669"/>
    <property type="project" value="UniProtKB-UniRule"/>
</dbReference>
<dbReference type="GO" id="GO:0005524">
    <property type="term" value="F:ATP binding"/>
    <property type="evidence" value="ECO:0007669"/>
    <property type="project" value="UniProtKB-UniRule"/>
</dbReference>
<dbReference type="GO" id="GO:0046872">
    <property type="term" value="F:metal ion binding"/>
    <property type="evidence" value="ECO:0007669"/>
    <property type="project" value="UniProtKB-KW"/>
</dbReference>
<dbReference type="GO" id="GO:0016730">
    <property type="term" value="F:oxidoreductase activity, acting on iron-sulfur proteins as donors"/>
    <property type="evidence" value="ECO:0007669"/>
    <property type="project" value="InterPro"/>
</dbReference>
<dbReference type="GO" id="GO:0016636">
    <property type="term" value="F:oxidoreductase activity, acting on the CH-CH group of donors, iron-sulfur protein as acceptor"/>
    <property type="evidence" value="ECO:0007669"/>
    <property type="project" value="UniProtKB-UniRule"/>
</dbReference>
<dbReference type="GO" id="GO:0036068">
    <property type="term" value="P:light-independent chlorophyll biosynthetic process"/>
    <property type="evidence" value="ECO:0007669"/>
    <property type="project" value="UniProtKB-UniRule"/>
</dbReference>
<dbReference type="GO" id="GO:0019685">
    <property type="term" value="P:photosynthesis, dark reaction"/>
    <property type="evidence" value="ECO:0007669"/>
    <property type="project" value="InterPro"/>
</dbReference>
<dbReference type="CDD" id="cd02032">
    <property type="entry name" value="Bchl-like"/>
    <property type="match status" value="1"/>
</dbReference>
<dbReference type="Gene3D" id="3.40.50.300">
    <property type="entry name" value="P-loop containing nucleotide triphosphate hydrolases"/>
    <property type="match status" value="1"/>
</dbReference>
<dbReference type="HAMAP" id="MF_00355">
    <property type="entry name" value="ChlL_BchL"/>
    <property type="match status" value="1"/>
</dbReference>
<dbReference type="InterPro" id="IPR030655">
    <property type="entry name" value="NifH/chlL_CS"/>
</dbReference>
<dbReference type="InterPro" id="IPR000392">
    <property type="entry name" value="NifH/frxC"/>
</dbReference>
<dbReference type="InterPro" id="IPR027417">
    <property type="entry name" value="P-loop_NTPase"/>
</dbReference>
<dbReference type="InterPro" id="IPR005971">
    <property type="entry name" value="Protochlorophyllide_ATP-bd"/>
</dbReference>
<dbReference type="NCBIfam" id="TIGR01281">
    <property type="entry name" value="DPOR_bchL"/>
    <property type="match status" value="1"/>
</dbReference>
<dbReference type="PANTHER" id="PTHR42864">
    <property type="entry name" value="LIGHT-INDEPENDENT PROTOCHLOROPHYLLIDE REDUCTASE IRON-SULFUR ATP-BINDING PROTEIN"/>
    <property type="match status" value="1"/>
</dbReference>
<dbReference type="PANTHER" id="PTHR42864:SF2">
    <property type="entry name" value="LIGHT-INDEPENDENT PROTOCHLOROPHYLLIDE REDUCTASE IRON-SULFUR ATP-BINDING PROTEIN"/>
    <property type="match status" value="1"/>
</dbReference>
<dbReference type="Pfam" id="PF00142">
    <property type="entry name" value="Fer4_NifH"/>
    <property type="match status" value="1"/>
</dbReference>
<dbReference type="PIRSF" id="PIRSF000363">
    <property type="entry name" value="Nitrogenase_iron"/>
    <property type="match status" value="1"/>
</dbReference>
<dbReference type="PRINTS" id="PR00091">
    <property type="entry name" value="NITROGNASEII"/>
</dbReference>
<dbReference type="SUPFAM" id="SSF52540">
    <property type="entry name" value="P-loop containing nucleoside triphosphate hydrolases"/>
    <property type="match status" value="1"/>
</dbReference>
<dbReference type="PROSITE" id="PS00746">
    <property type="entry name" value="NIFH_FRXC_1"/>
    <property type="match status" value="1"/>
</dbReference>
<dbReference type="PROSITE" id="PS00692">
    <property type="entry name" value="NIFH_FRXC_2"/>
    <property type="match status" value="1"/>
</dbReference>
<dbReference type="PROSITE" id="PS51026">
    <property type="entry name" value="NIFH_FRXC_3"/>
    <property type="match status" value="1"/>
</dbReference>
<gene>
    <name evidence="1" type="primary">chlL</name>
</gene>
<sequence length="291" mass="31809">MKIAVYGKGGIGKSTTSCNISVALARRGQKVLQIGCDPKHDSTFTLTGFLIPTIIDTLQSKDYHYEDIWPEDVIHKGYGGVDCVEAGGPPAGAGCGGYVVGETVKLLKELNAFYEYDIILFDVLGDVVCGGFAAPLNYADYCVIITDNGFDALFAANRITASIREKARTHPLRLAGLVGNRTSKRDLIHKYVEACPMPVIEVLPIIEDIRVSRVKGKTLFEMVGSEPSLNYVCKYYLDIADQILSQPEGIVPKEIPDRELFSLLSDLYLNPIGGGGQKKKNQENLLGFTRI</sequence>
<proteinExistence type="inferred from homology"/>
<accession>Q695L6</accession>
<organism>
    <name type="scientific">Larix decidua</name>
    <name type="common">European larch</name>
    <dbReference type="NCBI Taxonomy" id="71402"/>
    <lineage>
        <taxon>Eukaryota</taxon>
        <taxon>Viridiplantae</taxon>
        <taxon>Streptophyta</taxon>
        <taxon>Embryophyta</taxon>
        <taxon>Tracheophyta</taxon>
        <taxon>Spermatophyta</taxon>
        <taxon>Pinopsida</taxon>
        <taxon>Pinidae</taxon>
        <taxon>Conifers I</taxon>
        <taxon>Pinales</taxon>
        <taxon>Pinaceae</taxon>
        <taxon>Larix</taxon>
    </lineage>
</organism>
<keyword id="KW-0004">4Fe-4S</keyword>
<keyword id="KW-0067">ATP-binding</keyword>
<keyword id="KW-0149">Chlorophyll biosynthesis</keyword>
<keyword id="KW-0150">Chloroplast</keyword>
<keyword id="KW-0408">Iron</keyword>
<keyword id="KW-0411">Iron-sulfur</keyword>
<keyword id="KW-0460">Magnesium</keyword>
<keyword id="KW-0479">Metal-binding</keyword>
<keyword id="KW-0547">Nucleotide-binding</keyword>
<keyword id="KW-0560">Oxidoreductase</keyword>
<keyword id="KW-0602">Photosynthesis</keyword>
<keyword id="KW-0934">Plastid</keyword>